<organism>
    <name type="scientific">Pyricularia oryzae (strain 70-15 / ATCC MYA-4617 / FGSC 8958)</name>
    <name type="common">Rice blast fungus</name>
    <name type="synonym">Magnaporthe oryzae</name>
    <dbReference type="NCBI Taxonomy" id="242507"/>
    <lineage>
        <taxon>Eukaryota</taxon>
        <taxon>Fungi</taxon>
        <taxon>Dikarya</taxon>
        <taxon>Ascomycota</taxon>
        <taxon>Pezizomycotina</taxon>
        <taxon>Sordariomycetes</taxon>
        <taxon>Sordariomycetidae</taxon>
        <taxon>Magnaporthales</taxon>
        <taxon>Pyriculariaceae</taxon>
        <taxon>Pyricularia</taxon>
    </lineage>
</organism>
<gene>
    <name evidence="8" type="primary">NEC1</name>
    <name type="ORF">MGG_00806</name>
</gene>
<proteinExistence type="evidence at protein level"/>
<dbReference type="EC" id="2.3.1.-" evidence="7"/>
<dbReference type="EMBL" id="CM001235">
    <property type="protein sequence ID" value="EHA48594.1"/>
    <property type="molecule type" value="Genomic_DNA"/>
</dbReference>
<dbReference type="RefSeq" id="XP_003718178.1">
    <property type="nucleotide sequence ID" value="XM_003718130.1"/>
</dbReference>
<dbReference type="SMR" id="G4NEB1"/>
<dbReference type="STRING" id="242507.G4NEB1"/>
<dbReference type="EnsemblFungi" id="MGG_00806T0">
    <property type="protein sequence ID" value="MGG_00806T0"/>
    <property type="gene ID" value="MGG_00806"/>
</dbReference>
<dbReference type="GeneID" id="2675225"/>
<dbReference type="KEGG" id="mgr:MGG_00806"/>
<dbReference type="VEuPathDB" id="FungiDB:MGG_00806"/>
<dbReference type="eggNOG" id="KOG1202">
    <property type="taxonomic scope" value="Eukaryota"/>
</dbReference>
<dbReference type="HOGENOM" id="CLU_000022_31_0_1"/>
<dbReference type="InParanoid" id="G4NEB1"/>
<dbReference type="OMA" id="EIACMNS"/>
<dbReference type="OrthoDB" id="329835at2759"/>
<dbReference type="Proteomes" id="UP000009058">
    <property type="component" value="Chromosome 5"/>
</dbReference>
<dbReference type="GO" id="GO:0004312">
    <property type="term" value="F:fatty acid synthase activity"/>
    <property type="evidence" value="ECO:0007669"/>
    <property type="project" value="TreeGrafter"/>
</dbReference>
<dbReference type="GO" id="GO:0008168">
    <property type="term" value="F:methyltransferase activity"/>
    <property type="evidence" value="ECO:0007669"/>
    <property type="project" value="UniProtKB-KW"/>
</dbReference>
<dbReference type="GO" id="GO:0016491">
    <property type="term" value="F:oxidoreductase activity"/>
    <property type="evidence" value="ECO:0007669"/>
    <property type="project" value="UniProtKB-KW"/>
</dbReference>
<dbReference type="GO" id="GO:0031177">
    <property type="term" value="F:phosphopantetheine binding"/>
    <property type="evidence" value="ECO:0007669"/>
    <property type="project" value="InterPro"/>
</dbReference>
<dbReference type="GO" id="GO:0006633">
    <property type="term" value="P:fatty acid biosynthetic process"/>
    <property type="evidence" value="ECO:0007669"/>
    <property type="project" value="TreeGrafter"/>
</dbReference>
<dbReference type="GO" id="GO:0032259">
    <property type="term" value="P:methylation"/>
    <property type="evidence" value="ECO:0007669"/>
    <property type="project" value="UniProtKB-KW"/>
</dbReference>
<dbReference type="GO" id="GO:0044550">
    <property type="term" value="P:secondary metabolite biosynthetic process"/>
    <property type="evidence" value="ECO:0007669"/>
    <property type="project" value="TreeGrafter"/>
</dbReference>
<dbReference type="CDD" id="cd02440">
    <property type="entry name" value="AdoMet_MTases"/>
    <property type="match status" value="1"/>
</dbReference>
<dbReference type="CDD" id="cd05195">
    <property type="entry name" value="enoyl_red"/>
    <property type="match status" value="1"/>
</dbReference>
<dbReference type="CDD" id="cd05274">
    <property type="entry name" value="KR_FAS_SDR_x"/>
    <property type="match status" value="1"/>
</dbReference>
<dbReference type="CDD" id="cd00833">
    <property type="entry name" value="PKS"/>
    <property type="match status" value="1"/>
</dbReference>
<dbReference type="Gene3D" id="3.30.70.3290">
    <property type="match status" value="1"/>
</dbReference>
<dbReference type="Gene3D" id="3.40.47.10">
    <property type="match status" value="2"/>
</dbReference>
<dbReference type="Gene3D" id="1.10.1200.10">
    <property type="entry name" value="ACP-like"/>
    <property type="match status" value="1"/>
</dbReference>
<dbReference type="Gene3D" id="3.40.366.10">
    <property type="entry name" value="Malonyl-Coenzyme A Acyl Carrier Protein, domain 2"/>
    <property type="match status" value="1"/>
</dbReference>
<dbReference type="Gene3D" id="3.90.180.10">
    <property type="entry name" value="Medium-chain alcohol dehydrogenases, catalytic domain"/>
    <property type="match status" value="1"/>
</dbReference>
<dbReference type="Gene3D" id="3.40.50.720">
    <property type="entry name" value="NAD(P)-binding Rossmann-like Domain"/>
    <property type="match status" value="2"/>
</dbReference>
<dbReference type="Gene3D" id="3.10.129.110">
    <property type="entry name" value="Polyketide synthase dehydratase"/>
    <property type="match status" value="1"/>
</dbReference>
<dbReference type="Gene3D" id="3.40.50.150">
    <property type="entry name" value="Vaccinia Virus protein VP39"/>
    <property type="match status" value="1"/>
</dbReference>
<dbReference type="InterPro" id="IPR001227">
    <property type="entry name" value="Ac_transferase_dom_sf"/>
</dbReference>
<dbReference type="InterPro" id="IPR036736">
    <property type="entry name" value="ACP-like_sf"/>
</dbReference>
<dbReference type="InterPro" id="IPR014043">
    <property type="entry name" value="Acyl_transferase_dom"/>
</dbReference>
<dbReference type="InterPro" id="IPR016035">
    <property type="entry name" value="Acyl_Trfase/lysoPLipase"/>
</dbReference>
<dbReference type="InterPro" id="IPR011032">
    <property type="entry name" value="GroES-like_sf"/>
</dbReference>
<dbReference type="InterPro" id="IPR014031">
    <property type="entry name" value="Ketoacyl_synth_C"/>
</dbReference>
<dbReference type="InterPro" id="IPR014030">
    <property type="entry name" value="Ketoacyl_synth_N"/>
</dbReference>
<dbReference type="InterPro" id="IPR016036">
    <property type="entry name" value="Malonyl_transacylase_ACP-bd"/>
</dbReference>
<dbReference type="InterPro" id="IPR013217">
    <property type="entry name" value="Methyltransf_12"/>
</dbReference>
<dbReference type="InterPro" id="IPR036291">
    <property type="entry name" value="NAD(P)-bd_dom_sf"/>
</dbReference>
<dbReference type="InterPro" id="IPR056501">
    <property type="entry name" value="NAD-bd_HRPKS_sdrA"/>
</dbReference>
<dbReference type="InterPro" id="IPR020841">
    <property type="entry name" value="PKS_Beta-ketoAc_synthase_dom"/>
</dbReference>
<dbReference type="InterPro" id="IPR042104">
    <property type="entry name" value="PKS_dehydratase_sf"/>
</dbReference>
<dbReference type="InterPro" id="IPR020807">
    <property type="entry name" value="PKS_DH"/>
</dbReference>
<dbReference type="InterPro" id="IPR049551">
    <property type="entry name" value="PKS_DH_C"/>
</dbReference>
<dbReference type="InterPro" id="IPR049552">
    <property type="entry name" value="PKS_DH_N"/>
</dbReference>
<dbReference type="InterPro" id="IPR020843">
    <property type="entry name" value="PKS_ER"/>
</dbReference>
<dbReference type="InterPro" id="IPR013968">
    <property type="entry name" value="PKS_KR"/>
</dbReference>
<dbReference type="InterPro" id="IPR049900">
    <property type="entry name" value="PKS_mFAS_DH"/>
</dbReference>
<dbReference type="InterPro" id="IPR050091">
    <property type="entry name" value="PKS_NRPS_Biosynth_Enz"/>
</dbReference>
<dbReference type="InterPro" id="IPR020806">
    <property type="entry name" value="PKS_PP-bd"/>
</dbReference>
<dbReference type="InterPro" id="IPR009081">
    <property type="entry name" value="PP-bd_ACP"/>
</dbReference>
<dbReference type="InterPro" id="IPR029063">
    <property type="entry name" value="SAM-dependent_MTases_sf"/>
</dbReference>
<dbReference type="InterPro" id="IPR016039">
    <property type="entry name" value="Thiolase-like"/>
</dbReference>
<dbReference type="PANTHER" id="PTHR43775:SF29">
    <property type="entry name" value="ASPERFURANONE POLYKETIDE SYNTHASE AFOG-RELATED"/>
    <property type="match status" value="1"/>
</dbReference>
<dbReference type="PANTHER" id="PTHR43775">
    <property type="entry name" value="FATTY ACID SYNTHASE"/>
    <property type="match status" value="1"/>
</dbReference>
<dbReference type="Pfam" id="PF23297">
    <property type="entry name" value="ACP_SdgA_C"/>
    <property type="match status" value="1"/>
</dbReference>
<dbReference type="Pfam" id="PF00698">
    <property type="entry name" value="Acyl_transf_1"/>
    <property type="match status" value="1"/>
</dbReference>
<dbReference type="Pfam" id="PF00109">
    <property type="entry name" value="ketoacyl-synt"/>
    <property type="match status" value="1"/>
</dbReference>
<dbReference type="Pfam" id="PF02801">
    <property type="entry name" value="Ketoacyl-synt_C"/>
    <property type="match status" value="1"/>
</dbReference>
<dbReference type="Pfam" id="PF08659">
    <property type="entry name" value="KR"/>
    <property type="match status" value="1"/>
</dbReference>
<dbReference type="Pfam" id="PF08242">
    <property type="entry name" value="Methyltransf_12"/>
    <property type="match status" value="1"/>
</dbReference>
<dbReference type="Pfam" id="PF23114">
    <property type="entry name" value="NAD-bd_HRPKS_sdrA"/>
    <property type="match status" value="1"/>
</dbReference>
<dbReference type="Pfam" id="PF21089">
    <property type="entry name" value="PKS_DH_N"/>
    <property type="match status" value="1"/>
</dbReference>
<dbReference type="Pfam" id="PF14765">
    <property type="entry name" value="PS-DH"/>
    <property type="match status" value="1"/>
</dbReference>
<dbReference type="SMART" id="SM00827">
    <property type="entry name" value="PKS_AT"/>
    <property type="match status" value="1"/>
</dbReference>
<dbReference type="SMART" id="SM00826">
    <property type="entry name" value="PKS_DH"/>
    <property type="match status" value="1"/>
</dbReference>
<dbReference type="SMART" id="SM00829">
    <property type="entry name" value="PKS_ER"/>
    <property type="match status" value="1"/>
</dbReference>
<dbReference type="SMART" id="SM00822">
    <property type="entry name" value="PKS_KR"/>
    <property type="match status" value="1"/>
</dbReference>
<dbReference type="SMART" id="SM00825">
    <property type="entry name" value="PKS_KS"/>
    <property type="match status" value="1"/>
</dbReference>
<dbReference type="SMART" id="SM00823">
    <property type="entry name" value="PKS_PP"/>
    <property type="match status" value="1"/>
</dbReference>
<dbReference type="SUPFAM" id="SSF47336">
    <property type="entry name" value="ACP-like"/>
    <property type="match status" value="1"/>
</dbReference>
<dbReference type="SUPFAM" id="SSF52151">
    <property type="entry name" value="FabD/lysophospholipase-like"/>
    <property type="match status" value="1"/>
</dbReference>
<dbReference type="SUPFAM" id="SSF50129">
    <property type="entry name" value="GroES-like"/>
    <property type="match status" value="1"/>
</dbReference>
<dbReference type="SUPFAM" id="SSF51735">
    <property type="entry name" value="NAD(P)-binding Rossmann-fold domains"/>
    <property type="match status" value="2"/>
</dbReference>
<dbReference type="SUPFAM" id="SSF55048">
    <property type="entry name" value="Probable ACP-binding domain of malonyl-CoA ACP transacylase"/>
    <property type="match status" value="1"/>
</dbReference>
<dbReference type="SUPFAM" id="SSF53335">
    <property type="entry name" value="S-adenosyl-L-methionine-dependent methyltransferases"/>
    <property type="match status" value="1"/>
</dbReference>
<dbReference type="SUPFAM" id="SSF53901">
    <property type="entry name" value="Thiolase-like"/>
    <property type="match status" value="2"/>
</dbReference>
<dbReference type="PROSITE" id="PS50075">
    <property type="entry name" value="CARRIER"/>
    <property type="match status" value="1"/>
</dbReference>
<dbReference type="PROSITE" id="PS52004">
    <property type="entry name" value="KS3_2"/>
    <property type="match status" value="1"/>
</dbReference>
<dbReference type="PROSITE" id="PS52019">
    <property type="entry name" value="PKS_MFAS_DH"/>
    <property type="match status" value="1"/>
</dbReference>
<evidence type="ECO:0000255" key="1"/>
<evidence type="ECO:0000255" key="2">
    <source>
        <dbReference type="PROSITE-ProRule" id="PRU00258"/>
    </source>
</evidence>
<evidence type="ECO:0000255" key="3">
    <source>
        <dbReference type="PROSITE-ProRule" id="PRU01348"/>
    </source>
</evidence>
<evidence type="ECO:0000255" key="4">
    <source>
        <dbReference type="PROSITE-ProRule" id="PRU01363"/>
    </source>
</evidence>
<evidence type="ECO:0000255" key="5">
    <source>
        <dbReference type="PROSITE-ProRule" id="PRU10022"/>
    </source>
</evidence>
<evidence type="ECO:0000256" key="6">
    <source>
        <dbReference type="SAM" id="MobiDB-lite"/>
    </source>
</evidence>
<evidence type="ECO:0000269" key="7">
    <source>
    </source>
</evidence>
<evidence type="ECO:0000303" key="8">
    <source>
    </source>
</evidence>
<evidence type="ECO:0000305" key="9">
    <source>
    </source>
</evidence>
<accession>G4NEB1</accession>
<reference key="1">
    <citation type="journal article" date="2005" name="Nature">
        <title>The genome sequence of the rice blast fungus Magnaporthe grisea.</title>
        <authorList>
            <person name="Dean R.A."/>
            <person name="Talbot N.J."/>
            <person name="Ebbole D.J."/>
            <person name="Farman M.L."/>
            <person name="Mitchell T.K."/>
            <person name="Orbach M.J."/>
            <person name="Thon M.R."/>
            <person name="Kulkarni R."/>
            <person name="Xu J.-R."/>
            <person name="Pan H."/>
            <person name="Read N.D."/>
            <person name="Lee Y.-H."/>
            <person name="Carbone I."/>
            <person name="Brown D."/>
            <person name="Oh Y.Y."/>
            <person name="Donofrio N."/>
            <person name="Jeong J.S."/>
            <person name="Soanes D.M."/>
            <person name="Djonovic S."/>
            <person name="Kolomiets E."/>
            <person name="Rehmeyer C."/>
            <person name="Li W."/>
            <person name="Harding M."/>
            <person name="Kim S."/>
            <person name="Lebrun M.-H."/>
            <person name="Bohnert H."/>
            <person name="Coughlan S."/>
            <person name="Butler J."/>
            <person name="Calvo S.E."/>
            <person name="Ma L.-J."/>
            <person name="Nicol R."/>
            <person name="Purcell S."/>
            <person name="Nusbaum C."/>
            <person name="Galagan J.E."/>
            <person name="Birren B.W."/>
        </authorList>
    </citation>
    <scope>NUCLEOTIDE SEQUENCE [LARGE SCALE GENOMIC DNA]</scope>
    <source>
        <strain>70-15 / ATCC MYA-4617 / FGSC 8958</strain>
    </source>
</reference>
<reference key="2">
    <citation type="journal article" date="2019" name="ChemBioChem">
        <title>Induction of nectriapyrone biosynthesis in the rice blast fungus Pyricularia oryzae by disturbance of the two-component signal transduction system.</title>
        <authorList>
            <person name="Motoyama T."/>
            <person name="Nogawa T."/>
            <person name="Hayashi T."/>
            <person name="Hirota H."/>
            <person name="Osada H."/>
        </authorList>
    </citation>
    <scope>IDENTIFICATION</scope>
    <scope>INDUCTION</scope>
    <scope>DISRUPTION PHENOTYPE</scope>
    <scope>FUNCTION</scope>
    <scope>CATALYTIC ACTIVITY</scope>
</reference>
<name>NEC1_PYRO7</name>
<feature type="chain" id="PRO_0000446265" description="Highly reducing polyketide synthase NEC1">
    <location>
        <begin position="1"/>
        <end position="2758"/>
    </location>
</feature>
<feature type="domain" description="Ketosynthase family 3 (KS3)" evidence="3 9">
    <location>
        <begin position="153"/>
        <end position="492"/>
    </location>
</feature>
<feature type="domain" description="PKS/mFAS DH" evidence="4">
    <location>
        <begin position="1124"/>
        <end position="1443"/>
    </location>
</feature>
<feature type="domain" description="Carrier" evidence="2 9">
    <location>
        <begin position="2673"/>
        <end position="2750"/>
    </location>
</feature>
<feature type="region of interest" description="Disordered" evidence="6">
    <location>
        <begin position="512"/>
        <end position="576"/>
    </location>
</feature>
<feature type="region of interest" description="Malonyl-CoA:ACP transacylase (MAT) domain" evidence="1 9">
    <location>
        <begin position="700"/>
        <end position="1044"/>
    </location>
</feature>
<feature type="region of interest" description="Dehydratase (DH) domain" evidence="1 9">
    <location>
        <begin position="1124"/>
        <end position="1442"/>
    </location>
</feature>
<feature type="region of interest" description="N-terminal hotdog fold" evidence="4">
    <location>
        <begin position="1124"/>
        <end position="1255"/>
    </location>
</feature>
<feature type="region of interest" description="C-terminal hotdog fold" evidence="4">
    <location>
        <begin position="1283"/>
        <end position="1443"/>
    </location>
</feature>
<feature type="region of interest" description="Methyltransferase (CMet) domain" evidence="1 9">
    <location>
        <begin position="1622"/>
        <end position="1727"/>
    </location>
</feature>
<feature type="region of interest" description="Enoyl reductase (ER) domain" evidence="1 9">
    <location>
        <begin position="2031"/>
        <end position="2344"/>
    </location>
</feature>
<feature type="region of interest" description="Ketoreductase (KR) domain" evidence="1 9">
    <location>
        <begin position="2372"/>
        <end position="2553"/>
    </location>
</feature>
<feature type="compositionally biased region" description="Low complexity" evidence="6">
    <location>
        <begin position="566"/>
        <end position="576"/>
    </location>
</feature>
<feature type="active site" description="For malonyltransferase activity" evidence="5">
    <location>
        <position position="790"/>
    </location>
</feature>
<feature type="active site" description="Proton acceptor; for dehydratase activity" evidence="4">
    <location>
        <position position="1156"/>
    </location>
</feature>
<feature type="active site" description="Proton donor; for dehydratase activity" evidence="4">
    <location>
        <position position="1351"/>
    </location>
</feature>
<feature type="modified residue" description="O-(pantetheine 4'-phosphoryl)serine" evidence="2">
    <location>
        <position position="2710"/>
    </location>
</feature>
<keyword id="KW-0012">Acyltransferase</keyword>
<keyword id="KW-0489">Methyltransferase</keyword>
<keyword id="KW-0511">Multifunctional enzyme</keyword>
<keyword id="KW-0521">NADP</keyword>
<keyword id="KW-0560">Oxidoreductase</keyword>
<keyword id="KW-0596">Phosphopantetheine</keyword>
<keyword id="KW-0597">Phosphoprotein</keyword>
<keyword id="KW-1185">Reference proteome</keyword>
<keyword id="KW-0949">S-adenosyl-L-methionine</keyword>
<keyword id="KW-0808">Transferase</keyword>
<sequence length="2758" mass="298817">MFLKQQQQQPVEADFVDCQSTPRAGGPVAGTTFYTVPVRTFGVELGEYWYPGGSRGPVAFVETEKLATFPTRFCASDYAGSSHSSPQPTAVGVSRERLDRGRFLGKHGEMPTLPLDSIASCGVHRIPEYRWIGKWAEQVDDGASAVNIRRLFEASSPIIGLDARFPGDGDTAERFYDFLLAGRSARSEIPPERYNADAFWHPDGNRSGATRARAAHFLKGSISAFDAPLFSITPTEAAAMDPQQRGILESVYRALENGKFPLAVVGGCNLIISPEFALLLDAAGVLGPDGKSYSFDHRGNGYSRGEGFGVVVLKRLPDALRDGDVIRAVIRNSGSNSDGRSPGITQPTKAAQAALIKQVYANAGLDPSVTRFFEAHGTGTAVGDPIEASAIAEVFATHRSHKSPLWVGALKSNIGHLEGAAGVAAVIKGVLTLENGVIPPNTWFERKNPKILDSWNLQFPTEPVVWPQTGLRRMSINSFGVGGSNAHVVMDDALHFLQSYGLVGNHRTVALPRLPGSSSSRRVVSQADSGVEFTDSDSELKTPDGTHSPDSTAEHSKDMNFDSSCTNTDTLQTTDTNKQPKLSAIACPEVLSSSLSRLAVSDEEGRQSQIFVFSSSDKDGVSRVVNELADYLAKKAKQYKPNMRDQSKFLRDLSYTLACKRTRHAWRSFVVAKTQSSLSALLQAKSLATRAASEPQLAFVFTGQGAQWPTMGRGLMAYPTFRESLHEAEEYMTQTLRCPWSLTYELCKEAGASRINDAEFSQPVCTALQVALVDLLRTWKVRPHAVVGHSSGEIAAAYAAGQLSRQSSWRIAYYRGKLATKLIRSLRRRENSQDAHVKKTGMVAVGLDKEQTLAAISRVDSLVGEGSLEIACMNSQESHTVSGDMAKLDALVEVLKSENVFARKLSVGIGYHSRHMLPIADEYVRLIGDIGSDLPPSQGQSLPRYFSSLEGSEITLDRLQSPDYWANNLTSPVRFHEAVELMLRADLGCNSQGESSTVGKKTVTDLLEIGPHAALRGPIRSIVKQVHQTAEWKIGYATVLKRGDGAIENALGAAGSLFCRGFDVDLAAVNQHQVESSRQSIALNGGNNVLMLTDLPGYPFNHKKEYWAESRLSRNYRFRSAPRHELLGAPVPDWDKNDAVWRNYIRITENPWVEHHKVSGEILYPAAGMLVMAIEASRQLVDKDQQVAGFRFKDVSFHLALLIPTNDVGVETRFRLRSVSAGKLAGWSEFQLSTSENDDWKEHCRGFVRTEYSQTGSNTESDSSRLVHSQCEQEIVQAKKSCTSMVHADKVYRKLSNIGLDFGTTFRTLKDVKFDGTSRILARAESQVSHIKKSMPAEYLHSHLVHPSMLDAVLQANLIPIALGSSSRDSLVPVFASDFWVSAATKEGVDFHNSAYLISSHAKLTPGTADAEAALFGIHADTGEPLVTSSGLVFKTIPNTASSGQRNHHRPALNLDWKPDPNYLTEEDALRMFGAPAITQSSDEVSDDIGDCEILCLLYIRRFLASLDDTVVEKLDWHHLRYVSWMRHVVQTTTVKPAVDNISVMEARIAAAGTPEGKLIMAVGRNLANILVTGDVDPLDVIFGDKVAENVYREGLGSRRCYAQMCAYLDALAHVNPSMKILEVGGGTGGATGSIMETLMANGARRFDHYDFTDISPSFFEHAKEAFKQTAEHMSFRVLNIEKEPTDQGYDGQSYNLVLAANVLHATKSMERTLANVRKLLKPGGKLIVFELTNPAVLLGGFCFGVLPGWWLSDEADREWGPLMVVDTWRAYLERAGFSGVDAVFDDFPDAAHQTSSILVSTALPVADASKPVTAVDNLTRYCVLMGERPSVFQRQVADALLPALARTGSVETSTITASAGRDLKGSCCIVLSELDSPTLIDMTTDVFVALQGVLNSCRRIIWLSRSGDDIVAAPDRELVTGLARVVRAEREPPFSFVTVSFAEAERSETIVDKTLQVLDRGQETAENSFRVFNGVVHVPRLVEAGYLTDHISAEANPTSTQATTQEVKLGADPRDFVAQVQSTGLLQGAGTADVCFSEDHSRQQPLADDEVEFKVMACGVGAHDVAAEDSAAGESSLSDMGIQMAGFVTRLGSTAASKFSVGDRVTGISLEGAIKTRARTQAGLLAKISDKLAWNQAAQIPMAYFTACAIIQYMGVGDSDDILLVHRAAASAAGLAAVQVARSNGAKIFATVANAQERTALQGVGGLLTDQILDLDQNTTLSTIVKSKTGNRGVSMIIDSLPQSDVDHAASLVDCLAPFGRFVSLGDGPMPGISSRRNICLERFNGAELMALDYEKAQRIFLRAARFILDEPLAANAQVPVYKFSEVSEAFAQLGKGEDAVVLEPHDEDVVKVVTSQQSHTDFTSRFDPGASYMVVGGLGGLGRSVSRWMASKGAKSLVLVSRKGAVTPEAQVLVAELQDLGVKVTTPACDATDKMALRRALDQCVAHMPPIKGVIQCSMVLKDKRFFEMSLEEWNTAIRPKVDVSVNLHDALDTASLDFFIMLSSTVGLTGSVEQANYAAGGTFQDAFARSLAASQTASSGPVAVSLDLPVILDVGFVAEKPELMDQLRAAGWAYMEEEEFHAALGYHCFQRRQLDLPTSVLRAQVAPRLWLAQDTADEGTEPPAWVRDPLFSHLRPQSSETTGNGAAGGEAGKKEMKHTALLAAATSAAEAQAVVLDALLAKLSRVLSVELSDLDPACPLSRYGVDSLVAVSLRAWIGKELGAELSVFEMTDKPSIRALAAAVAGRSRLVSKALS</sequence>
<protein>
    <recommendedName>
        <fullName evidence="8">Highly reducing polyketide synthase NEC1</fullName>
        <ecNumber evidence="7">2.3.1.-</ecNumber>
    </recommendedName>
    <alternativeName>
        <fullName evidence="8">Nectriapyrone biosynthesis cluster protein 1</fullName>
    </alternativeName>
</protein>
<comment type="function">
    <text evidence="7">Highly reducing polyketide synthase; part of the gene cluster that mediates the biosynthesis of nectriapyrone and its analogs phomopyrone A, acropyrone and zaepyrone (PubMed:30443971). The nectriapyrone biosynthetic gene cluster consists of two genes, the highly reducing polyketide synthase NEC1 that produces a demethylated analog of nectriapyrone from one unit of acetyl-CoA and one unit of malonyl-CoA; and the O-methyltransferase NEC2 that further methylates the NEC1 product to yield nectriapyrone (PubMed:30443971). Nectriapyrone is further hydrolyzed to nectriapyrone D, also known as gulypyrone B, by an unidentified hydrolase localized outside the nectriapyrone cluster (PubMed:30443971).</text>
</comment>
<comment type="domain">
    <text evidence="9">Multidomain protein; including a ketosynthase (KS) that catalyzes repeated decarboxylative condensation to elongate the polyketide backbone; a malonyl-CoA:ACP transacylase (MAT) that selects and transfers the extender unit malonyl-CoA; a dehydratase (DH) domain that reduces hydroxyl groups to enoyl groups; a methyltransferase (CMeT) domain responsible for the incorporation of methyl groups; an enoylreductase (ER) domain that reduces enoyl groups to alkyl group; a ketoreductase (KR) domain that catalyzes beta-ketoreduction steps; and an acyl-carrier protein (ACP) that serves as the tether of the growing and completed polyketide via its phosphopantetheinyl arm.</text>
</comment>
<comment type="disruption phenotype">
    <text evidence="7">Completely abolishes the production of nectriapyrones.</text>
</comment>